<reference key="1">
    <citation type="journal article" date="2002" name="J. Bacteriol.">
        <title>Genome sequence and analysis of the oral bacterium Fusobacterium nucleatum strain ATCC 25586.</title>
        <authorList>
            <person name="Kapatral V."/>
            <person name="Anderson I."/>
            <person name="Ivanova N."/>
            <person name="Reznik G."/>
            <person name="Los T."/>
            <person name="Lykidis A."/>
            <person name="Bhattacharyya A."/>
            <person name="Bartman A."/>
            <person name="Gardner W."/>
            <person name="Grechkin G."/>
            <person name="Zhu L."/>
            <person name="Vasieva O."/>
            <person name="Chu L."/>
            <person name="Kogan Y."/>
            <person name="Chaga O."/>
            <person name="Goltsman E."/>
            <person name="Bernal A."/>
            <person name="Larsen N."/>
            <person name="D'Souza M."/>
            <person name="Walunas T."/>
            <person name="Pusch G."/>
            <person name="Haselkorn R."/>
            <person name="Fonstein M."/>
            <person name="Kyrpides N.C."/>
            <person name="Overbeek R."/>
        </authorList>
    </citation>
    <scope>NUCLEOTIDE SEQUENCE [LARGE SCALE GENOMIC DNA]</scope>
    <source>
        <strain>ATCC 25586 / DSM 15643 / BCRC 10681 / CIP 101130 / JCM 8532 / KCTC 2640 / LMG 13131 / VPI 4355</strain>
    </source>
</reference>
<evidence type="ECO:0000250" key="1"/>
<evidence type="ECO:0000305" key="2"/>
<dbReference type="EC" id="2.1.1.228"/>
<dbReference type="EMBL" id="AE009951">
    <property type="protein sequence ID" value="AAL94489.1"/>
    <property type="molecule type" value="Genomic_DNA"/>
</dbReference>
<dbReference type="RefSeq" id="NP_603190.1">
    <property type="nucleotide sequence ID" value="NC_003454.1"/>
</dbReference>
<dbReference type="RefSeq" id="WP_011016280.1">
    <property type="nucleotide sequence ID" value="NZ_OZ209243.1"/>
</dbReference>
<dbReference type="SMR" id="Q8R5Y4"/>
<dbReference type="FunCoup" id="Q8R5Y4">
    <property type="interactions" value="338"/>
</dbReference>
<dbReference type="STRING" id="190304.FN0283"/>
<dbReference type="PaxDb" id="190304-FN0283"/>
<dbReference type="EnsemblBacteria" id="AAL94489">
    <property type="protein sequence ID" value="AAL94489"/>
    <property type="gene ID" value="FN0283"/>
</dbReference>
<dbReference type="GeneID" id="79783294"/>
<dbReference type="KEGG" id="fnu:FN0283"/>
<dbReference type="PATRIC" id="fig|190304.8.peg.863"/>
<dbReference type="eggNOG" id="COG0336">
    <property type="taxonomic scope" value="Bacteria"/>
</dbReference>
<dbReference type="HOGENOM" id="CLU_047363_0_1_0"/>
<dbReference type="InParanoid" id="Q8R5Y4"/>
<dbReference type="BioCyc" id="FNUC190304:G1FZS-881-MONOMER"/>
<dbReference type="Proteomes" id="UP000002521">
    <property type="component" value="Chromosome"/>
</dbReference>
<dbReference type="GO" id="GO:0005829">
    <property type="term" value="C:cytosol"/>
    <property type="evidence" value="ECO:0000318"/>
    <property type="project" value="GO_Central"/>
</dbReference>
<dbReference type="GO" id="GO:0052906">
    <property type="term" value="F:tRNA (guanine(37)-N1)-methyltransferase activity"/>
    <property type="evidence" value="ECO:0000318"/>
    <property type="project" value="GO_Central"/>
</dbReference>
<dbReference type="GO" id="GO:0002939">
    <property type="term" value="P:tRNA N1-guanine methylation"/>
    <property type="evidence" value="ECO:0000318"/>
    <property type="project" value="GO_Central"/>
</dbReference>
<dbReference type="CDD" id="cd18080">
    <property type="entry name" value="TrmD-like"/>
    <property type="match status" value="1"/>
</dbReference>
<dbReference type="FunFam" id="1.10.1270.20:FF:000001">
    <property type="entry name" value="tRNA (guanine-N(1)-)-methyltransferase"/>
    <property type="match status" value="1"/>
</dbReference>
<dbReference type="FunFam" id="3.40.1280.10:FF:000001">
    <property type="entry name" value="tRNA (guanine-N(1)-)-methyltransferase"/>
    <property type="match status" value="1"/>
</dbReference>
<dbReference type="Gene3D" id="3.40.1280.10">
    <property type="match status" value="1"/>
</dbReference>
<dbReference type="Gene3D" id="1.10.1270.20">
    <property type="entry name" value="tRNA(m1g37)methyltransferase, domain 2"/>
    <property type="match status" value="1"/>
</dbReference>
<dbReference type="HAMAP" id="MF_00605">
    <property type="entry name" value="TrmD"/>
    <property type="match status" value="1"/>
</dbReference>
<dbReference type="InterPro" id="IPR029028">
    <property type="entry name" value="Alpha/beta_knot_MTases"/>
</dbReference>
<dbReference type="InterPro" id="IPR023148">
    <property type="entry name" value="tRNA_m1G_MeTrfase_C_sf"/>
</dbReference>
<dbReference type="InterPro" id="IPR002649">
    <property type="entry name" value="tRNA_m1G_MeTrfase_TrmD"/>
</dbReference>
<dbReference type="InterPro" id="IPR029026">
    <property type="entry name" value="tRNA_m1G_MTases_N"/>
</dbReference>
<dbReference type="InterPro" id="IPR016009">
    <property type="entry name" value="tRNA_MeTrfase_TRMD/TRM10"/>
</dbReference>
<dbReference type="NCBIfam" id="NF000648">
    <property type="entry name" value="PRK00026.1"/>
    <property type="match status" value="1"/>
</dbReference>
<dbReference type="NCBIfam" id="TIGR00088">
    <property type="entry name" value="trmD"/>
    <property type="match status" value="1"/>
</dbReference>
<dbReference type="PANTHER" id="PTHR46417">
    <property type="entry name" value="TRNA (GUANINE-N(1)-)-METHYLTRANSFERASE"/>
    <property type="match status" value="1"/>
</dbReference>
<dbReference type="PANTHER" id="PTHR46417:SF1">
    <property type="entry name" value="TRNA (GUANINE-N(1)-)-METHYLTRANSFERASE"/>
    <property type="match status" value="1"/>
</dbReference>
<dbReference type="Pfam" id="PF01746">
    <property type="entry name" value="tRNA_m1G_MT"/>
    <property type="match status" value="1"/>
</dbReference>
<dbReference type="PIRSF" id="PIRSF000386">
    <property type="entry name" value="tRNA_mtase"/>
    <property type="match status" value="1"/>
</dbReference>
<dbReference type="SUPFAM" id="SSF75217">
    <property type="entry name" value="alpha/beta knot"/>
    <property type="match status" value="1"/>
</dbReference>
<proteinExistence type="inferred from homology"/>
<comment type="function">
    <text evidence="1">Specifically methylates guanosine-37 in various tRNAs.</text>
</comment>
<comment type="catalytic activity">
    <reaction>
        <text>guanosine(37) in tRNA + S-adenosyl-L-methionine = N(1)-methylguanosine(37) in tRNA + S-adenosyl-L-homocysteine + H(+)</text>
        <dbReference type="Rhea" id="RHEA:36899"/>
        <dbReference type="Rhea" id="RHEA-COMP:10145"/>
        <dbReference type="Rhea" id="RHEA-COMP:10147"/>
        <dbReference type="ChEBI" id="CHEBI:15378"/>
        <dbReference type="ChEBI" id="CHEBI:57856"/>
        <dbReference type="ChEBI" id="CHEBI:59789"/>
        <dbReference type="ChEBI" id="CHEBI:73542"/>
        <dbReference type="ChEBI" id="CHEBI:74269"/>
        <dbReference type="EC" id="2.1.1.228"/>
    </reaction>
</comment>
<comment type="subunit">
    <text evidence="1">Homodimer.</text>
</comment>
<comment type="subcellular location">
    <subcellularLocation>
        <location evidence="2">Cytoplasm</location>
    </subcellularLocation>
</comment>
<comment type="similarity">
    <text evidence="2">Belongs to the RNA methyltransferase TrmD family.</text>
</comment>
<organism>
    <name type="scientific">Fusobacterium nucleatum subsp. nucleatum (strain ATCC 25586 / DSM 15643 / BCRC 10681 / CIP 101130 / JCM 8532 / KCTC 2640 / LMG 13131 / VPI 4355)</name>
    <dbReference type="NCBI Taxonomy" id="190304"/>
    <lineage>
        <taxon>Bacteria</taxon>
        <taxon>Fusobacteriati</taxon>
        <taxon>Fusobacteriota</taxon>
        <taxon>Fusobacteriia</taxon>
        <taxon>Fusobacteriales</taxon>
        <taxon>Fusobacteriaceae</taxon>
        <taxon>Fusobacterium</taxon>
    </lineage>
</organism>
<sequence>MKINILTLFPKMFDGFLSESIIARAIKFGAVEVNIIDIRDYCFDKHKQADDMPFGGGNGMVMKPEPLFLALENVSGKVIYTSPQGKIFNQEIAKELVKEEELTIIAGHYEGVDERVVENKVDMELSIGDFVLTGGEIAAMAISDTIIRLLPDVIKKESYENDSFYNGLLDYPHYTRPAEYKDLKVPEVLLSGNHKKIDEWRLKESLRRTYLRRRELIENRELTKLEKKLLDEIKKEEV</sequence>
<keyword id="KW-0963">Cytoplasm</keyword>
<keyword id="KW-0489">Methyltransferase</keyword>
<keyword id="KW-1185">Reference proteome</keyword>
<keyword id="KW-0949">S-adenosyl-L-methionine</keyword>
<keyword id="KW-0808">Transferase</keyword>
<keyword id="KW-0819">tRNA processing</keyword>
<accession>Q8R5Y4</accession>
<gene>
    <name type="primary">trmD</name>
    <name type="ordered locus">FN0283</name>
</gene>
<feature type="chain" id="PRO_0000060379" description="tRNA (guanine-N(1)-)-methyltransferase">
    <location>
        <begin position="1"/>
        <end position="238"/>
    </location>
</feature>
<feature type="binding site" evidence="1">
    <location>
        <position position="107"/>
    </location>
    <ligand>
        <name>S-adenosyl-L-methionine</name>
        <dbReference type="ChEBI" id="CHEBI:59789"/>
    </ligand>
</feature>
<feature type="binding site" evidence="1">
    <location>
        <begin position="127"/>
        <end position="132"/>
    </location>
    <ligand>
        <name>S-adenosyl-L-methionine</name>
        <dbReference type="ChEBI" id="CHEBI:59789"/>
    </ligand>
</feature>
<name>TRMD_FUSNN</name>
<protein>
    <recommendedName>
        <fullName>tRNA (guanine-N(1)-)-methyltransferase</fullName>
        <ecNumber>2.1.1.228</ecNumber>
    </recommendedName>
    <alternativeName>
        <fullName>M1G-methyltransferase</fullName>
    </alternativeName>
    <alternativeName>
        <fullName>tRNA [GM37] methyltransferase</fullName>
    </alternativeName>
</protein>